<reference key="1">
    <citation type="journal article" date="2015" name="Mol. Plant">
        <title>Unraveling the triterpenoid saponin biosynthesis of the African shrub Maesa lanceolata.</title>
        <authorList>
            <person name="Moses T."/>
            <person name="Pollier J."/>
            <person name="Faizal A."/>
            <person name="Apers S."/>
            <person name="Pieters L."/>
            <person name="Thevelein J.M."/>
            <person name="Geelen D."/>
            <person name="Goossens A."/>
        </authorList>
    </citation>
    <scope>NUCLEOTIDE SEQUENCE [MRNA]</scope>
    <scope>FUNCTION</scope>
    <scope>CATALYTIC ACTIVITY</scope>
</reference>
<proteinExistence type="evidence at protein level"/>
<sequence length="475" mass="53412">MWVVGLIGVAVVTILITQYVYKWRNPKTVGVLPPGSMGLPLIGETLQLLSRNPSLDLHPFIKSRIQRYGQIFATNIVGRPIIVTADPQLNNYLFQQEGRAVELWYLDSFQKLFNLEGANRPNAVGHIHKYVRSVYLSLFGVESLKTKLLADIEKTVRKNLIGGTTKGTFDAKHASANMVAVFAAKYLFGHDYEKSKEDVGSIIDNFVQGLLAFPLNVPGTKFHKCMKDKKRLESMITNKLKERIADPNSGQGDFLDQAVKDLNSEFFITETFIVSVTMGALFATVESVSTAIGLAFKFFAEHPWVLDDLKAEHEAVLSKREDRNSPLTWDEYRSMTHTMHFINEVVRLGNVFPGILRKALKDIPYNGYTIPSGWTIMIVTSTLAMNPEIFKDPLAFNPKRWRDIDPETQTKNFMPFGGGTRQCAGAELAKAFFATFLHVLISEYSWKKVKGGSVARTPMLSFEDGIFIEVTKKNK</sequence>
<comment type="function">
    <text evidence="3">Involved in the biosynthetic pathway of maesasaponins, which are oleanane-type saponins with diverse biological activities (PubMed:25578277). Catalyzes the C-16alpha oxidation of beta-amyrin to form 16alpha-hydroxy-beta-amyrin (PubMed:25578277).</text>
</comment>
<comment type="catalytic activity">
    <reaction evidence="3">
        <text>beta-amyrin + reduced [NADPH--hemoprotein reductase] + O2 = 16alpha-hydroxy-beta-amyrin + oxidized [NADPH--hemoprotein reductase] + H2O + H(+)</text>
        <dbReference type="Rhea" id="RHEA:56708"/>
        <dbReference type="Rhea" id="RHEA-COMP:11964"/>
        <dbReference type="Rhea" id="RHEA-COMP:11965"/>
        <dbReference type="ChEBI" id="CHEBI:10352"/>
        <dbReference type="ChEBI" id="CHEBI:15377"/>
        <dbReference type="ChEBI" id="CHEBI:15378"/>
        <dbReference type="ChEBI" id="CHEBI:15379"/>
        <dbReference type="ChEBI" id="CHEBI:57618"/>
        <dbReference type="ChEBI" id="CHEBI:58210"/>
        <dbReference type="ChEBI" id="CHEBI:140655"/>
        <dbReference type="EC" id="1.14.14.171"/>
    </reaction>
    <physiologicalReaction direction="left-to-right" evidence="3">
        <dbReference type="Rhea" id="RHEA:56709"/>
    </physiologicalReaction>
</comment>
<comment type="cofactor">
    <cofactor evidence="1">
        <name>heme</name>
        <dbReference type="ChEBI" id="CHEBI:30413"/>
    </cofactor>
</comment>
<comment type="subcellular location">
    <subcellularLocation>
        <location evidence="2">Membrane</location>
        <topology evidence="2">Single-pass membrane protein</topology>
    </subcellularLocation>
</comment>
<comment type="similarity">
    <text evidence="5">Belongs to the cytochrome P450 family.</text>
</comment>
<gene>
    <name evidence="4" type="primary">CYP87D16</name>
</gene>
<dbReference type="EC" id="1.14.14.171" evidence="3"/>
<dbReference type="EMBL" id="KF318735">
    <property type="protein sequence ID" value="AHF22090.1"/>
    <property type="molecule type" value="mRNA"/>
</dbReference>
<dbReference type="SMR" id="A0A0B4KZX8"/>
<dbReference type="KEGG" id="ag:AHF22090"/>
<dbReference type="BRENDA" id="1.14.14.171">
    <property type="organism ID" value="16279"/>
</dbReference>
<dbReference type="GO" id="GO:0016020">
    <property type="term" value="C:membrane"/>
    <property type="evidence" value="ECO:0007669"/>
    <property type="project" value="UniProtKB-SubCell"/>
</dbReference>
<dbReference type="GO" id="GO:0020037">
    <property type="term" value="F:heme binding"/>
    <property type="evidence" value="ECO:0007669"/>
    <property type="project" value="InterPro"/>
</dbReference>
<dbReference type="GO" id="GO:0005506">
    <property type="term" value="F:iron ion binding"/>
    <property type="evidence" value="ECO:0007669"/>
    <property type="project" value="InterPro"/>
</dbReference>
<dbReference type="GO" id="GO:0004497">
    <property type="term" value="F:monooxygenase activity"/>
    <property type="evidence" value="ECO:0007669"/>
    <property type="project" value="UniProtKB-KW"/>
</dbReference>
<dbReference type="GO" id="GO:0016705">
    <property type="term" value="F:oxidoreductase activity, acting on paired donors, with incorporation or reduction of molecular oxygen"/>
    <property type="evidence" value="ECO:0007669"/>
    <property type="project" value="InterPro"/>
</dbReference>
<dbReference type="GO" id="GO:0016132">
    <property type="term" value="P:brassinosteroid biosynthetic process"/>
    <property type="evidence" value="ECO:0007669"/>
    <property type="project" value="TreeGrafter"/>
</dbReference>
<dbReference type="GO" id="GO:0010268">
    <property type="term" value="P:brassinosteroid homeostasis"/>
    <property type="evidence" value="ECO:0007669"/>
    <property type="project" value="TreeGrafter"/>
</dbReference>
<dbReference type="GO" id="GO:0016125">
    <property type="term" value="P:sterol metabolic process"/>
    <property type="evidence" value="ECO:0007669"/>
    <property type="project" value="TreeGrafter"/>
</dbReference>
<dbReference type="Gene3D" id="1.10.630.10">
    <property type="entry name" value="Cytochrome P450"/>
    <property type="match status" value="1"/>
</dbReference>
<dbReference type="InterPro" id="IPR001128">
    <property type="entry name" value="Cyt_P450"/>
</dbReference>
<dbReference type="InterPro" id="IPR017972">
    <property type="entry name" value="Cyt_P450_CS"/>
</dbReference>
<dbReference type="InterPro" id="IPR002401">
    <property type="entry name" value="Cyt_P450_E_grp-I"/>
</dbReference>
<dbReference type="InterPro" id="IPR036396">
    <property type="entry name" value="Cyt_P450_sf"/>
</dbReference>
<dbReference type="PANTHER" id="PTHR24286">
    <property type="entry name" value="CYTOCHROME P450 26"/>
    <property type="match status" value="1"/>
</dbReference>
<dbReference type="PANTHER" id="PTHR24286:SF305">
    <property type="entry name" value="CYTOCHROME P450 708A2"/>
    <property type="match status" value="1"/>
</dbReference>
<dbReference type="Pfam" id="PF00067">
    <property type="entry name" value="p450"/>
    <property type="match status" value="1"/>
</dbReference>
<dbReference type="PRINTS" id="PR00463">
    <property type="entry name" value="EP450I"/>
</dbReference>
<dbReference type="SUPFAM" id="SSF48264">
    <property type="entry name" value="Cytochrome P450"/>
    <property type="match status" value="1"/>
</dbReference>
<dbReference type="PROSITE" id="PS00086">
    <property type="entry name" value="CYTOCHROME_P450"/>
    <property type="match status" value="1"/>
</dbReference>
<accession>A0A0B4KZX8</accession>
<name>C87D1_MAELA</name>
<evidence type="ECO:0000250" key="1">
    <source>
        <dbReference type="UniProtKB" id="Q96242"/>
    </source>
</evidence>
<evidence type="ECO:0000255" key="2"/>
<evidence type="ECO:0000269" key="3">
    <source>
    </source>
</evidence>
<evidence type="ECO:0000303" key="4">
    <source>
    </source>
</evidence>
<evidence type="ECO:0000305" key="5"/>
<keyword id="KW-0349">Heme</keyword>
<keyword id="KW-0408">Iron</keyword>
<keyword id="KW-0472">Membrane</keyword>
<keyword id="KW-0479">Metal-binding</keyword>
<keyword id="KW-0503">Monooxygenase</keyword>
<keyword id="KW-0560">Oxidoreductase</keyword>
<keyword id="KW-0812">Transmembrane</keyword>
<keyword id="KW-1133">Transmembrane helix</keyword>
<feature type="chain" id="PRO_0000455170" description="Beta-amyrin 16-alpha-hydroxylase CYP87D16">
    <location>
        <begin position="1"/>
        <end position="475"/>
    </location>
</feature>
<feature type="transmembrane region" description="Helical" evidence="2">
    <location>
        <begin position="3"/>
        <end position="23"/>
    </location>
</feature>
<feature type="binding site" description="axial binding residue" evidence="1">
    <location>
        <position position="423"/>
    </location>
    <ligand>
        <name>heme</name>
        <dbReference type="ChEBI" id="CHEBI:30413"/>
    </ligand>
    <ligandPart>
        <name>Fe</name>
        <dbReference type="ChEBI" id="CHEBI:18248"/>
    </ligandPart>
</feature>
<protein>
    <recommendedName>
        <fullName evidence="5">Beta-amyrin 16-alpha-hydroxylase CYP87D16</fullName>
        <ecNumber evidence="3">1.14.14.171</ecNumber>
    </recommendedName>
    <alternativeName>
        <fullName evidence="4">Cytochrome P450 87D16</fullName>
    </alternativeName>
</protein>
<organism>
    <name type="scientific">Maesa lanceolata</name>
    <name type="common">False assegai</name>
    <dbReference type="NCBI Taxonomy" id="992730"/>
    <lineage>
        <taxon>Eukaryota</taxon>
        <taxon>Viridiplantae</taxon>
        <taxon>Streptophyta</taxon>
        <taxon>Embryophyta</taxon>
        <taxon>Tracheophyta</taxon>
        <taxon>Spermatophyta</taxon>
        <taxon>Magnoliopsida</taxon>
        <taxon>eudicotyledons</taxon>
        <taxon>Gunneridae</taxon>
        <taxon>Pentapetalae</taxon>
        <taxon>asterids</taxon>
        <taxon>Ericales</taxon>
        <taxon>Primulaceae</taxon>
        <taxon>Maesa</taxon>
    </lineage>
</organism>